<evidence type="ECO:0000250" key="1">
    <source>
        <dbReference type="UniProtKB" id="P9WPE7"/>
    </source>
</evidence>
<evidence type="ECO:0000255" key="2">
    <source>
        <dbReference type="HAMAP-Rule" id="MF_00600"/>
    </source>
</evidence>
<evidence type="ECO:0000256" key="3">
    <source>
        <dbReference type="SAM" id="MobiDB-lite"/>
    </source>
</evidence>
<evidence type="ECO:0000305" key="4"/>
<proteinExistence type="inferred from homology"/>
<accession>A1KFR2</accession>
<dbReference type="EC" id="5.6.1.7" evidence="2"/>
<dbReference type="EMBL" id="AM408590">
    <property type="protein sequence ID" value="CAL70464.1"/>
    <property type="molecule type" value="Genomic_DNA"/>
</dbReference>
<dbReference type="SMR" id="A1KFR2"/>
<dbReference type="KEGG" id="mbb:BCG_0479"/>
<dbReference type="HOGENOM" id="CLU_016503_3_0_11"/>
<dbReference type="Proteomes" id="UP000001472">
    <property type="component" value="Chromosome"/>
</dbReference>
<dbReference type="GO" id="GO:0042603">
    <property type="term" value="C:capsule"/>
    <property type="evidence" value="ECO:0007669"/>
    <property type="project" value="UniProtKB-SubCell"/>
</dbReference>
<dbReference type="GO" id="GO:0009986">
    <property type="term" value="C:cell surface"/>
    <property type="evidence" value="ECO:0007669"/>
    <property type="project" value="UniProtKB-SubCell"/>
</dbReference>
<dbReference type="GO" id="GO:0005737">
    <property type="term" value="C:cytoplasm"/>
    <property type="evidence" value="ECO:0007669"/>
    <property type="project" value="UniProtKB-UniRule"/>
</dbReference>
<dbReference type="GO" id="GO:0005576">
    <property type="term" value="C:extracellular region"/>
    <property type="evidence" value="ECO:0007669"/>
    <property type="project" value="UniProtKB-KW"/>
</dbReference>
<dbReference type="GO" id="GO:0005524">
    <property type="term" value="F:ATP binding"/>
    <property type="evidence" value="ECO:0007669"/>
    <property type="project" value="UniProtKB-UniRule"/>
</dbReference>
<dbReference type="GO" id="GO:0140662">
    <property type="term" value="F:ATP-dependent protein folding chaperone"/>
    <property type="evidence" value="ECO:0007669"/>
    <property type="project" value="InterPro"/>
</dbReference>
<dbReference type="GO" id="GO:0016853">
    <property type="term" value="F:isomerase activity"/>
    <property type="evidence" value="ECO:0007669"/>
    <property type="project" value="UniProtKB-KW"/>
</dbReference>
<dbReference type="GO" id="GO:0051082">
    <property type="term" value="F:unfolded protein binding"/>
    <property type="evidence" value="ECO:0007669"/>
    <property type="project" value="UniProtKB-UniRule"/>
</dbReference>
<dbReference type="GO" id="GO:0042026">
    <property type="term" value="P:protein refolding"/>
    <property type="evidence" value="ECO:0007669"/>
    <property type="project" value="UniProtKB-UniRule"/>
</dbReference>
<dbReference type="CDD" id="cd03344">
    <property type="entry name" value="GroEL"/>
    <property type="match status" value="1"/>
</dbReference>
<dbReference type="FunFam" id="3.50.7.10:FF:000001">
    <property type="entry name" value="60 kDa chaperonin"/>
    <property type="match status" value="1"/>
</dbReference>
<dbReference type="Gene3D" id="3.50.7.10">
    <property type="entry name" value="GroEL"/>
    <property type="match status" value="1"/>
</dbReference>
<dbReference type="Gene3D" id="1.10.560.10">
    <property type="entry name" value="GroEL-like equatorial domain"/>
    <property type="match status" value="1"/>
</dbReference>
<dbReference type="Gene3D" id="3.30.260.10">
    <property type="entry name" value="TCP-1-like chaperonin intermediate domain"/>
    <property type="match status" value="1"/>
</dbReference>
<dbReference type="HAMAP" id="MF_00600">
    <property type="entry name" value="CH60"/>
    <property type="match status" value="1"/>
</dbReference>
<dbReference type="InterPro" id="IPR018370">
    <property type="entry name" value="Chaperonin_Cpn60_CS"/>
</dbReference>
<dbReference type="InterPro" id="IPR001844">
    <property type="entry name" value="Cpn60/GroEL"/>
</dbReference>
<dbReference type="InterPro" id="IPR002423">
    <property type="entry name" value="Cpn60/GroEL/TCP-1"/>
</dbReference>
<dbReference type="InterPro" id="IPR027409">
    <property type="entry name" value="GroEL-like_apical_dom_sf"/>
</dbReference>
<dbReference type="InterPro" id="IPR027413">
    <property type="entry name" value="GROEL-like_equatorial_sf"/>
</dbReference>
<dbReference type="InterPro" id="IPR027410">
    <property type="entry name" value="TCP-1-like_intermed_sf"/>
</dbReference>
<dbReference type="NCBIfam" id="TIGR02348">
    <property type="entry name" value="GroEL"/>
    <property type="match status" value="1"/>
</dbReference>
<dbReference type="NCBIfam" id="NF000592">
    <property type="entry name" value="PRK00013.1"/>
    <property type="match status" value="1"/>
</dbReference>
<dbReference type="NCBIfam" id="NF009487">
    <property type="entry name" value="PRK12849.1"/>
    <property type="match status" value="1"/>
</dbReference>
<dbReference type="NCBIfam" id="NF009488">
    <property type="entry name" value="PRK12850.1"/>
    <property type="match status" value="1"/>
</dbReference>
<dbReference type="NCBIfam" id="NF009489">
    <property type="entry name" value="PRK12851.1"/>
    <property type="match status" value="1"/>
</dbReference>
<dbReference type="PANTHER" id="PTHR45633">
    <property type="entry name" value="60 KDA HEAT SHOCK PROTEIN, MITOCHONDRIAL"/>
    <property type="match status" value="1"/>
</dbReference>
<dbReference type="Pfam" id="PF00118">
    <property type="entry name" value="Cpn60_TCP1"/>
    <property type="match status" value="1"/>
</dbReference>
<dbReference type="PRINTS" id="PR00298">
    <property type="entry name" value="CHAPERONIN60"/>
</dbReference>
<dbReference type="SUPFAM" id="SSF52029">
    <property type="entry name" value="GroEL apical domain-like"/>
    <property type="match status" value="1"/>
</dbReference>
<dbReference type="SUPFAM" id="SSF48592">
    <property type="entry name" value="GroEL equatorial domain-like"/>
    <property type="match status" value="2"/>
</dbReference>
<dbReference type="PROSITE" id="PS00296">
    <property type="entry name" value="CHAPERONINS_CPN60"/>
    <property type="match status" value="1"/>
</dbReference>
<feature type="chain" id="PRO_0000332014" description="Chaperonin GroEL 2">
    <location>
        <begin position="1"/>
        <end position="540"/>
    </location>
</feature>
<feature type="region of interest" description="Disordered" evidence="3">
    <location>
        <begin position="521"/>
        <end position="540"/>
    </location>
</feature>
<feature type="compositionally biased region" description="Gly residues" evidence="3">
    <location>
        <begin position="530"/>
        <end position="540"/>
    </location>
</feature>
<feature type="binding site" evidence="2">
    <location>
        <begin position="29"/>
        <end position="32"/>
    </location>
    <ligand>
        <name>ATP</name>
        <dbReference type="ChEBI" id="CHEBI:30616"/>
    </ligand>
</feature>
<feature type="binding site" evidence="2">
    <location>
        <begin position="86"/>
        <end position="90"/>
    </location>
    <ligand>
        <name>ATP</name>
        <dbReference type="ChEBI" id="CHEBI:30616"/>
    </ligand>
</feature>
<feature type="binding site" evidence="2">
    <location>
        <position position="413"/>
    </location>
    <ligand>
        <name>ATP</name>
        <dbReference type="ChEBI" id="CHEBI:30616"/>
    </ligand>
</feature>
<feature type="binding site" evidence="2">
    <location>
        <position position="492"/>
    </location>
    <ligand>
        <name>ATP</name>
        <dbReference type="ChEBI" id="CHEBI:30616"/>
    </ligand>
</feature>
<comment type="function">
    <text evidence="2">Together with its co-chaperonin GroES, plays an essential role in assisting protein folding. The GroEL-GroES system forms a nano-cage that allows encapsulation of the non-native substrate proteins and provides a physical environment optimized to promote and accelerate protein folding.</text>
</comment>
<comment type="catalytic activity">
    <reaction evidence="2">
        <text>ATP + H2O + a folded polypeptide = ADP + phosphate + an unfolded polypeptide.</text>
        <dbReference type="EC" id="5.6.1.7"/>
    </reaction>
</comment>
<comment type="subunit">
    <text evidence="1">Mostly homodimers in solution, does not seem to form larger oligomers (By similarity).</text>
</comment>
<comment type="subcellular location">
    <subcellularLocation>
        <location evidence="1">Secreted</location>
        <location evidence="1">Capsule</location>
    </subcellularLocation>
    <subcellularLocation>
        <location evidence="1">Cell surface</location>
    </subcellularLocation>
    <subcellularLocation>
        <location evidence="1">Secreted</location>
        <location evidence="1">Cell wall</location>
    </subcellularLocation>
</comment>
<comment type="similarity">
    <text evidence="2">Belongs to the chaperonin (HSP60) family.</text>
</comment>
<sequence>MAKTIAYDEEARRGLERGLNALADAVKVTLGPKGRNVVLEKKWGAPTITNDGVSIAKEIELEDPYEKIGAELVKEVAKKTDDVAGDGTTTATVLAQALVREGLRNVAAGANPLGLKRGIEKAVEKVTETLLKGAKEVETKEQIAATAAISAGDQSIGDLIAEAMDKVGNEGVITVEESNTFGLQLELTEGMRFDKGYISGYFVTDPERQEAVLEDPYILLVSSKVSTVKDLLPLLEKVIGAGKPLLIIAEDVEGEALSTLVVNKIRGTFKSVAVKAPGFGDRRKAMLQDMAILTGGQVISEEVGLTLENADLSLLGKARKVVVTKDETTIVEGAGDTDAIAGRVAQIRQEIENSDSDYDREKLQERLAKLAGGVAVIKAGAATEVELKERKHRIEDAVRNAKAAVEEGIVAGGGVTLLQAAPTLDELKLEGDEATGANIVKVALEAPLKQIAFNSGLEPGVVAEKVRNLPAGHGLNAQTGVYEDLLAAGVADPVKVTRSALQNAASIAGLFLTTEAVVADKPEKEKASVPGGGDMGGMDF</sequence>
<reference key="1">
    <citation type="journal article" date="2007" name="Proc. Natl. Acad. Sci. U.S.A.">
        <title>Genome plasticity of BCG and impact on vaccine efficacy.</title>
        <authorList>
            <person name="Brosch R."/>
            <person name="Gordon S.V."/>
            <person name="Garnier T."/>
            <person name="Eiglmeier K."/>
            <person name="Frigui W."/>
            <person name="Valenti P."/>
            <person name="Dos Santos S."/>
            <person name="Duthoy S."/>
            <person name="Lacroix C."/>
            <person name="Garcia-Pelayo C."/>
            <person name="Inwald J.K."/>
            <person name="Golby P."/>
            <person name="Garcia J.N."/>
            <person name="Hewinson R.G."/>
            <person name="Behr M.A."/>
            <person name="Quail M.A."/>
            <person name="Churcher C."/>
            <person name="Barrell B.G."/>
            <person name="Parkhill J."/>
            <person name="Cole S.T."/>
        </authorList>
    </citation>
    <scope>NUCLEOTIDE SEQUENCE [LARGE SCALE GENOMIC DNA]</scope>
    <source>
        <strain>BCG / Pasteur 1173P2</strain>
    </source>
</reference>
<protein>
    <recommendedName>
        <fullName evidence="2">Chaperonin GroEL 2</fullName>
        <ecNumber evidence="2">5.6.1.7</ecNumber>
    </recommendedName>
    <alternativeName>
        <fullName evidence="2 4">60 kDa chaperonin 2</fullName>
    </alternativeName>
    <alternativeName>
        <fullName evidence="2">Chaperonin-60 2</fullName>
        <shortName evidence="2">Cpn60 2</shortName>
    </alternativeName>
</protein>
<organism>
    <name type="scientific">Mycobacterium bovis (strain BCG / Pasteur 1173P2)</name>
    <dbReference type="NCBI Taxonomy" id="410289"/>
    <lineage>
        <taxon>Bacteria</taxon>
        <taxon>Bacillati</taxon>
        <taxon>Actinomycetota</taxon>
        <taxon>Actinomycetes</taxon>
        <taxon>Mycobacteriales</taxon>
        <taxon>Mycobacteriaceae</taxon>
        <taxon>Mycobacterium</taxon>
        <taxon>Mycobacterium tuberculosis complex</taxon>
    </lineage>
</organism>
<keyword id="KW-0067">ATP-binding</keyword>
<keyword id="KW-0134">Cell wall</keyword>
<keyword id="KW-0143">Chaperone</keyword>
<keyword id="KW-0413">Isomerase</keyword>
<keyword id="KW-0547">Nucleotide-binding</keyword>
<keyword id="KW-0964">Secreted</keyword>
<name>CH602_MYCBP</name>
<gene>
    <name evidence="2" type="primary">groEL2</name>
    <name evidence="2" type="synonym">groL2</name>
    <name type="ordered locus">BCG_0479</name>
</gene>